<accession>Q8ZQQ5</accession>
<name>BIOD1_SALTY</name>
<dbReference type="EC" id="6.3.3.3" evidence="1"/>
<dbReference type="EMBL" id="AE006468">
    <property type="protein sequence ID" value="AAL19734.1"/>
    <property type="molecule type" value="Genomic_DNA"/>
</dbReference>
<dbReference type="SMR" id="Q8ZQQ5"/>
<dbReference type="STRING" id="99287.STM0797"/>
<dbReference type="PaxDb" id="99287-STM0797"/>
<dbReference type="KEGG" id="stm:STM0797"/>
<dbReference type="PATRIC" id="fig|99287.12.peg.831"/>
<dbReference type="HOGENOM" id="CLU_072551_0_0_6"/>
<dbReference type="OMA" id="NPIVIFQ"/>
<dbReference type="PhylomeDB" id="Q8ZQQ5"/>
<dbReference type="BioCyc" id="SENT99287:STM0797-MONOMER"/>
<dbReference type="UniPathway" id="UPA00078">
    <property type="reaction ID" value="UER00161"/>
</dbReference>
<dbReference type="Proteomes" id="UP000001014">
    <property type="component" value="Chromosome"/>
</dbReference>
<dbReference type="GO" id="GO:0005829">
    <property type="term" value="C:cytosol"/>
    <property type="evidence" value="ECO:0000318"/>
    <property type="project" value="GO_Central"/>
</dbReference>
<dbReference type="GO" id="GO:0005524">
    <property type="term" value="F:ATP binding"/>
    <property type="evidence" value="ECO:0007669"/>
    <property type="project" value="UniProtKB-UniRule"/>
</dbReference>
<dbReference type="GO" id="GO:0004141">
    <property type="term" value="F:dethiobiotin synthase activity"/>
    <property type="evidence" value="ECO:0000318"/>
    <property type="project" value="GO_Central"/>
</dbReference>
<dbReference type="GO" id="GO:0000287">
    <property type="term" value="F:magnesium ion binding"/>
    <property type="evidence" value="ECO:0007669"/>
    <property type="project" value="UniProtKB-UniRule"/>
</dbReference>
<dbReference type="GO" id="GO:0009102">
    <property type="term" value="P:biotin biosynthetic process"/>
    <property type="evidence" value="ECO:0000318"/>
    <property type="project" value="GO_Central"/>
</dbReference>
<dbReference type="CDD" id="cd03109">
    <property type="entry name" value="DTBS"/>
    <property type="match status" value="1"/>
</dbReference>
<dbReference type="FunFam" id="3.40.50.300:FF:000292">
    <property type="entry name" value="ATP-dependent dethiobiotin synthetase BioD"/>
    <property type="match status" value="1"/>
</dbReference>
<dbReference type="Gene3D" id="3.40.50.300">
    <property type="entry name" value="P-loop containing nucleotide triphosphate hydrolases"/>
    <property type="match status" value="1"/>
</dbReference>
<dbReference type="HAMAP" id="MF_00336">
    <property type="entry name" value="BioD"/>
    <property type="match status" value="1"/>
</dbReference>
<dbReference type="InterPro" id="IPR004472">
    <property type="entry name" value="DTB_synth_BioD"/>
</dbReference>
<dbReference type="InterPro" id="IPR027417">
    <property type="entry name" value="P-loop_NTPase"/>
</dbReference>
<dbReference type="NCBIfam" id="TIGR00347">
    <property type="entry name" value="bioD"/>
    <property type="match status" value="1"/>
</dbReference>
<dbReference type="PANTHER" id="PTHR43210">
    <property type="entry name" value="DETHIOBIOTIN SYNTHETASE"/>
    <property type="match status" value="1"/>
</dbReference>
<dbReference type="PANTHER" id="PTHR43210:SF5">
    <property type="entry name" value="DETHIOBIOTIN SYNTHETASE"/>
    <property type="match status" value="1"/>
</dbReference>
<dbReference type="Pfam" id="PF13500">
    <property type="entry name" value="AAA_26"/>
    <property type="match status" value="1"/>
</dbReference>
<dbReference type="PIRSF" id="PIRSF006755">
    <property type="entry name" value="DTB_synth"/>
    <property type="match status" value="1"/>
</dbReference>
<dbReference type="SUPFAM" id="SSF52540">
    <property type="entry name" value="P-loop containing nucleoside triphosphate hydrolases"/>
    <property type="match status" value="1"/>
</dbReference>
<protein>
    <recommendedName>
        <fullName evidence="1">ATP-dependent dethiobiotin synthetase BioD 1</fullName>
        <ecNumber evidence="1">6.3.3.3</ecNumber>
    </recommendedName>
    <alternativeName>
        <fullName evidence="1">DTB synthetase 1</fullName>
        <shortName evidence="1">DTBS 1</shortName>
    </alternativeName>
    <alternativeName>
        <fullName evidence="1">Dethiobiotin synthase 1</fullName>
    </alternativeName>
</protein>
<organism>
    <name type="scientific">Salmonella typhimurium (strain LT2 / SGSC1412 / ATCC 700720)</name>
    <dbReference type="NCBI Taxonomy" id="99287"/>
    <lineage>
        <taxon>Bacteria</taxon>
        <taxon>Pseudomonadati</taxon>
        <taxon>Pseudomonadota</taxon>
        <taxon>Gammaproteobacteria</taxon>
        <taxon>Enterobacterales</taxon>
        <taxon>Enterobacteriaceae</taxon>
        <taxon>Salmonella</taxon>
    </lineage>
</organism>
<evidence type="ECO:0000255" key="1">
    <source>
        <dbReference type="HAMAP-Rule" id="MF_00336"/>
    </source>
</evidence>
<proteinExistence type="inferred from homology"/>
<sequence length="228" mass="24200">MTKRYFVTGTDTEVGKTVASCALLQAATQLGYQTVGYKPVASGSEMTTDGLRNSDALALQRNSSLPQPYSAINPYTFAEPTSPHIVSADEGRAIDAAVLSRGLRTLEAQADWVLTEGAGGWFTPLSATLTFADWVQTEQLPVILVVGVKLGCINHAMLTALAVEQAGLPLVGWIANDIQPPGARHGEYLATLRRVIPAPLLGEIPWLGVSPSQAATGQYLDLSPLERA</sequence>
<reference key="1">
    <citation type="journal article" date="2001" name="Nature">
        <title>Complete genome sequence of Salmonella enterica serovar Typhimurium LT2.</title>
        <authorList>
            <person name="McClelland M."/>
            <person name="Sanderson K.E."/>
            <person name="Spieth J."/>
            <person name="Clifton S.W."/>
            <person name="Latreille P."/>
            <person name="Courtney L."/>
            <person name="Porwollik S."/>
            <person name="Ali J."/>
            <person name="Dante M."/>
            <person name="Du F."/>
            <person name="Hou S."/>
            <person name="Layman D."/>
            <person name="Leonard S."/>
            <person name="Nguyen C."/>
            <person name="Scott K."/>
            <person name="Holmes A."/>
            <person name="Grewal N."/>
            <person name="Mulvaney E."/>
            <person name="Ryan E."/>
            <person name="Sun H."/>
            <person name="Florea L."/>
            <person name="Miller W."/>
            <person name="Stoneking T."/>
            <person name="Nhan M."/>
            <person name="Waterston R."/>
            <person name="Wilson R.K."/>
        </authorList>
    </citation>
    <scope>NUCLEOTIDE SEQUENCE [LARGE SCALE GENOMIC DNA]</scope>
    <source>
        <strain>LT2 / SGSC1412 / ATCC 700720</strain>
    </source>
</reference>
<comment type="function">
    <text evidence="1">Catalyzes a mechanistically unusual reaction, the ATP-dependent insertion of CO2 between the N7 and N8 nitrogen atoms of 7,8-diaminopelargonic acid (DAPA, also called 7,8-diammoniononanoate) to form a ureido ring.</text>
</comment>
<comment type="catalytic activity">
    <reaction evidence="1">
        <text>(7R,8S)-7,8-diammoniononanoate + CO2 + ATP = (4R,5S)-dethiobiotin + ADP + phosphate + 3 H(+)</text>
        <dbReference type="Rhea" id="RHEA:15805"/>
        <dbReference type="ChEBI" id="CHEBI:15378"/>
        <dbReference type="ChEBI" id="CHEBI:16526"/>
        <dbReference type="ChEBI" id="CHEBI:30616"/>
        <dbReference type="ChEBI" id="CHEBI:43474"/>
        <dbReference type="ChEBI" id="CHEBI:149469"/>
        <dbReference type="ChEBI" id="CHEBI:149473"/>
        <dbReference type="ChEBI" id="CHEBI:456216"/>
        <dbReference type="EC" id="6.3.3.3"/>
    </reaction>
</comment>
<comment type="cofactor">
    <cofactor evidence="1">
        <name>Mg(2+)</name>
        <dbReference type="ChEBI" id="CHEBI:18420"/>
    </cofactor>
</comment>
<comment type="pathway">
    <text evidence="1">Cofactor biosynthesis; biotin biosynthesis; biotin from 7,8-diaminononanoate: step 1/2.</text>
</comment>
<comment type="subunit">
    <text evidence="1">Homodimer.</text>
</comment>
<comment type="subcellular location">
    <subcellularLocation>
        <location evidence="1">Cytoplasm</location>
    </subcellularLocation>
</comment>
<comment type="similarity">
    <text evidence="1">Belongs to the dethiobiotin synthetase family.</text>
</comment>
<gene>
    <name evidence="1" type="primary">bioD1</name>
    <name type="ordered locus">STM0797</name>
</gene>
<keyword id="KW-0067">ATP-binding</keyword>
<keyword id="KW-0093">Biotin biosynthesis</keyword>
<keyword id="KW-0963">Cytoplasm</keyword>
<keyword id="KW-0436">Ligase</keyword>
<keyword id="KW-0460">Magnesium</keyword>
<keyword id="KW-0479">Metal-binding</keyword>
<keyword id="KW-0547">Nucleotide-binding</keyword>
<keyword id="KW-1185">Reference proteome</keyword>
<feature type="chain" id="PRO_0000187985" description="ATP-dependent dethiobiotin synthetase BioD 1">
    <location>
        <begin position="1"/>
        <end position="228"/>
    </location>
</feature>
<feature type="active site" evidence="1">
    <location>
        <position position="38"/>
    </location>
</feature>
<feature type="binding site" evidence="1">
    <location>
        <begin position="13"/>
        <end position="18"/>
    </location>
    <ligand>
        <name>ATP</name>
        <dbReference type="ChEBI" id="CHEBI:30616"/>
    </ligand>
</feature>
<feature type="binding site" evidence="1">
    <location>
        <position position="17"/>
    </location>
    <ligand>
        <name>Mg(2+)</name>
        <dbReference type="ChEBI" id="CHEBI:18420"/>
    </ligand>
</feature>
<feature type="binding site" evidence="1">
    <location>
        <position position="42"/>
    </location>
    <ligand>
        <name>substrate</name>
    </ligand>
</feature>
<feature type="binding site" evidence="1">
    <location>
        <position position="55"/>
    </location>
    <ligand>
        <name>ATP</name>
        <dbReference type="ChEBI" id="CHEBI:30616"/>
    </ligand>
</feature>
<feature type="binding site" evidence="1">
    <location>
        <position position="55"/>
    </location>
    <ligand>
        <name>Mg(2+)</name>
        <dbReference type="ChEBI" id="CHEBI:18420"/>
    </ligand>
</feature>
<feature type="binding site" evidence="1">
    <location>
        <begin position="116"/>
        <end position="119"/>
    </location>
    <ligand>
        <name>ATP</name>
        <dbReference type="ChEBI" id="CHEBI:30616"/>
    </ligand>
</feature>
<feature type="binding site" evidence="1">
    <location>
        <position position="116"/>
    </location>
    <ligand>
        <name>Mg(2+)</name>
        <dbReference type="ChEBI" id="CHEBI:18420"/>
    </ligand>
</feature>
<feature type="binding site" evidence="1">
    <location>
        <begin position="176"/>
        <end position="177"/>
    </location>
    <ligand>
        <name>ATP</name>
        <dbReference type="ChEBI" id="CHEBI:30616"/>
    </ligand>
</feature>
<feature type="binding site" evidence="1">
    <location>
        <begin position="205"/>
        <end position="207"/>
    </location>
    <ligand>
        <name>ATP</name>
        <dbReference type="ChEBI" id="CHEBI:30616"/>
    </ligand>
</feature>